<proteinExistence type="inferred from homology"/>
<comment type="function">
    <text evidence="1">Specifically methylates the pseudouridine at position 1915 (m3Psi1915) in 23S rRNA.</text>
</comment>
<comment type="catalytic activity">
    <reaction evidence="1">
        <text>pseudouridine(1915) in 23S rRNA + S-adenosyl-L-methionine = N(3)-methylpseudouridine(1915) in 23S rRNA + S-adenosyl-L-homocysteine + H(+)</text>
        <dbReference type="Rhea" id="RHEA:42752"/>
        <dbReference type="Rhea" id="RHEA-COMP:10221"/>
        <dbReference type="Rhea" id="RHEA-COMP:10222"/>
        <dbReference type="ChEBI" id="CHEBI:15378"/>
        <dbReference type="ChEBI" id="CHEBI:57856"/>
        <dbReference type="ChEBI" id="CHEBI:59789"/>
        <dbReference type="ChEBI" id="CHEBI:65314"/>
        <dbReference type="ChEBI" id="CHEBI:74486"/>
        <dbReference type="EC" id="2.1.1.177"/>
    </reaction>
</comment>
<comment type="subunit">
    <text evidence="1">Homodimer.</text>
</comment>
<comment type="subcellular location">
    <subcellularLocation>
        <location evidence="1">Cytoplasm</location>
    </subcellularLocation>
</comment>
<comment type="similarity">
    <text evidence="1">Belongs to the RNA methyltransferase RlmH family.</text>
</comment>
<organism>
    <name type="scientific">Burkholderia mallei (strain SAVP1)</name>
    <dbReference type="NCBI Taxonomy" id="320388"/>
    <lineage>
        <taxon>Bacteria</taxon>
        <taxon>Pseudomonadati</taxon>
        <taxon>Pseudomonadota</taxon>
        <taxon>Betaproteobacteria</taxon>
        <taxon>Burkholderiales</taxon>
        <taxon>Burkholderiaceae</taxon>
        <taxon>Burkholderia</taxon>
        <taxon>pseudomallei group</taxon>
    </lineage>
</organism>
<feature type="chain" id="PRO_1000061766" description="Ribosomal RNA large subunit methyltransferase H">
    <location>
        <begin position="1"/>
        <end position="156"/>
    </location>
</feature>
<feature type="binding site" evidence="1">
    <location>
        <position position="73"/>
    </location>
    <ligand>
        <name>S-adenosyl-L-methionine</name>
        <dbReference type="ChEBI" id="CHEBI:59789"/>
    </ligand>
</feature>
<feature type="binding site" evidence="1">
    <location>
        <position position="104"/>
    </location>
    <ligand>
        <name>S-adenosyl-L-methionine</name>
        <dbReference type="ChEBI" id="CHEBI:59789"/>
    </ligand>
</feature>
<feature type="binding site" evidence="1">
    <location>
        <begin position="123"/>
        <end position="128"/>
    </location>
    <ligand>
        <name>S-adenosyl-L-methionine</name>
        <dbReference type="ChEBI" id="CHEBI:59789"/>
    </ligand>
</feature>
<accession>A1V2F7</accession>
<gene>
    <name evidence="1" type="primary">rlmH</name>
    <name type="ordered locus">BMASAVP1_A1070</name>
</gene>
<sequence>MKLHIVAVGHKMPGWIASGFDEYAKRMPPELRIELREVKPELRSGSRTADSVMAAEQQRIEAALPKNARVVALDERGRDWTTMQLAQALPAWQQDGRDVAFVIGGADGLAPALKSRAELLLRVSSLTLPHGMVRVLLAEQLYRAWSITQNHPYHRA</sequence>
<dbReference type="EC" id="2.1.1.177" evidence="1"/>
<dbReference type="EMBL" id="CP000526">
    <property type="protein sequence ID" value="ABM50442.1"/>
    <property type="molecule type" value="Genomic_DNA"/>
</dbReference>
<dbReference type="RefSeq" id="WP_004186098.1">
    <property type="nucleotide sequence ID" value="NC_008785.1"/>
</dbReference>
<dbReference type="SMR" id="A1V2F7"/>
<dbReference type="GeneID" id="93059640"/>
<dbReference type="KEGG" id="bmv:BMASAVP1_A1070"/>
<dbReference type="HOGENOM" id="CLU_100552_1_0_4"/>
<dbReference type="GO" id="GO:0005737">
    <property type="term" value="C:cytoplasm"/>
    <property type="evidence" value="ECO:0007669"/>
    <property type="project" value="UniProtKB-SubCell"/>
</dbReference>
<dbReference type="GO" id="GO:0070038">
    <property type="term" value="F:rRNA (pseudouridine-N3-)-methyltransferase activity"/>
    <property type="evidence" value="ECO:0007669"/>
    <property type="project" value="UniProtKB-UniRule"/>
</dbReference>
<dbReference type="CDD" id="cd18081">
    <property type="entry name" value="RlmH-like"/>
    <property type="match status" value="1"/>
</dbReference>
<dbReference type="Gene3D" id="3.40.1280.10">
    <property type="match status" value="1"/>
</dbReference>
<dbReference type="HAMAP" id="MF_00658">
    <property type="entry name" value="23SrRNA_methyltr_H"/>
    <property type="match status" value="1"/>
</dbReference>
<dbReference type="InterPro" id="IPR029028">
    <property type="entry name" value="Alpha/beta_knot_MTases"/>
</dbReference>
<dbReference type="InterPro" id="IPR003742">
    <property type="entry name" value="RlmH-like"/>
</dbReference>
<dbReference type="InterPro" id="IPR029026">
    <property type="entry name" value="tRNA_m1G_MTases_N"/>
</dbReference>
<dbReference type="NCBIfam" id="NF000986">
    <property type="entry name" value="PRK00103.1-4"/>
    <property type="match status" value="1"/>
</dbReference>
<dbReference type="NCBIfam" id="TIGR00246">
    <property type="entry name" value="tRNA_RlmH_YbeA"/>
    <property type="match status" value="1"/>
</dbReference>
<dbReference type="PANTHER" id="PTHR33603">
    <property type="entry name" value="METHYLTRANSFERASE"/>
    <property type="match status" value="1"/>
</dbReference>
<dbReference type="PANTHER" id="PTHR33603:SF1">
    <property type="entry name" value="RIBOSOMAL RNA LARGE SUBUNIT METHYLTRANSFERASE H"/>
    <property type="match status" value="1"/>
</dbReference>
<dbReference type="Pfam" id="PF02590">
    <property type="entry name" value="SPOUT_MTase"/>
    <property type="match status" value="1"/>
</dbReference>
<dbReference type="PIRSF" id="PIRSF004505">
    <property type="entry name" value="MT_bac"/>
    <property type="match status" value="1"/>
</dbReference>
<dbReference type="SUPFAM" id="SSF75217">
    <property type="entry name" value="alpha/beta knot"/>
    <property type="match status" value="1"/>
</dbReference>
<name>RLMH_BURMS</name>
<keyword id="KW-0963">Cytoplasm</keyword>
<keyword id="KW-0489">Methyltransferase</keyword>
<keyword id="KW-0698">rRNA processing</keyword>
<keyword id="KW-0949">S-adenosyl-L-methionine</keyword>
<keyword id="KW-0808">Transferase</keyword>
<reference key="1">
    <citation type="journal article" date="2010" name="Genome Biol. Evol.">
        <title>Continuing evolution of Burkholderia mallei through genome reduction and large-scale rearrangements.</title>
        <authorList>
            <person name="Losada L."/>
            <person name="Ronning C.M."/>
            <person name="DeShazer D."/>
            <person name="Woods D."/>
            <person name="Fedorova N."/>
            <person name="Kim H.S."/>
            <person name="Shabalina S.A."/>
            <person name="Pearson T.R."/>
            <person name="Brinkac L."/>
            <person name="Tan P."/>
            <person name="Nandi T."/>
            <person name="Crabtree J."/>
            <person name="Badger J."/>
            <person name="Beckstrom-Sternberg S."/>
            <person name="Saqib M."/>
            <person name="Schutzer S.E."/>
            <person name="Keim P."/>
            <person name="Nierman W.C."/>
        </authorList>
    </citation>
    <scope>NUCLEOTIDE SEQUENCE [LARGE SCALE GENOMIC DNA]</scope>
    <source>
        <strain>SAVP1</strain>
    </source>
</reference>
<protein>
    <recommendedName>
        <fullName evidence="1">Ribosomal RNA large subunit methyltransferase H</fullName>
        <ecNumber evidence="1">2.1.1.177</ecNumber>
    </recommendedName>
    <alternativeName>
        <fullName evidence="1">23S rRNA (pseudouridine1915-N3)-methyltransferase</fullName>
    </alternativeName>
    <alternativeName>
        <fullName evidence="1">23S rRNA m3Psi1915 methyltransferase</fullName>
    </alternativeName>
    <alternativeName>
        <fullName evidence="1">rRNA (pseudouridine-N3-)-methyltransferase RlmH</fullName>
    </alternativeName>
</protein>
<evidence type="ECO:0000255" key="1">
    <source>
        <dbReference type="HAMAP-Rule" id="MF_00658"/>
    </source>
</evidence>